<protein>
    <recommendedName>
        <fullName evidence="1">Clustered mitochondria protein homolog</fullName>
    </recommendedName>
    <alternativeName>
        <fullName evidence="1">Protein TIF31 homolog</fullName>
    </alternativeName>
</protein>
<name>CLU_DEBHA</name>
<dbReference type="EMBL" id="CR382133">
    <property type="protein sequence ID" value="CAR65355.1"/>
    <property type="molecule type" value="Genomic_DNA"/>
</dbReference>
<dbReference type="RefSeq" id="XP_002769962.1">
    <property type="nucleotide sequence ID" value="XM_002769916.1"/>
</dbReference>
<dbReference type="SMR" id="B5RSP9"/>
<dbReference type="FunCoup" id="B5RSP9">
    <property type="interactions" value="1079"/>
</dbReference>
<dbReference type="STRING" id="284592.B5RSP9"/>
<dbReference type="GeneID" id="8998111"/>
<dbReference type="KEGG" id="dha:DEHA2A03102g"/>
<dbReference type="VEuPathDB" id="FungiDB:DEHA2A03102g"/>
<dbReference type="eggNOG" id="KOG1839">
    <property type="taxonomic scope" value="Eukaryota"/>
</dbReference>
<dbReference type="HOGENOM" id="CLU_003256_2_0_1"/>
<dbReference type="InParanoid" id="B5RSP9"/>
<dbReference type="OMA" id="HPVWDKD"/>
<dbReference type="OrthoDB" id="1414216at2759"/>
<dbReference type="Proteomes" id="UP000000599">
    <property type="component" value="Chromosome A"/>
</dbReference>
<dbReference type="GO" id="GO:0005737">
    <property type="term" value="C:cytoplasm"/>
    <property type="evidence" value="ECO:0007669"/>
    <property type="project" value="UniProtKB-SubCell"/>
</dbReference>
<dbReference type="GO" id="GO:0003729">
    <property type="term" value="F:mRNA binding"/>
    <property type="evidence" value="ECO:0007669"/>
    <property type="project" value="TreeGrafter"/>
</dbReference>
<dbReference type="GO" id="GO:0048312">
    <property type="term" value="P:intracellular distribution of mitochondria"/>
    <property type="evidence" value="ECO:0007669"/>
    <property type="project" value="TreeGrafter"/>
</dbReference>
<dbReference type="GO" id="GO:0007005">
    <property type="term" value="P:mitochondrion organization"/>
    <property type="evidence" value="ECO:0007669"/>
    <property type="project" value="UniProtKB-UniRule"/>
</dbReference>
<dbReference type="CDD" id="cd15466">
    <property type="entry name" value="CLU-central"/>
    <property type="match status" value="1"/>
</dbReference>
<dbReference type="Gene3D" id="1.25.40.10">
    <property type="entry name" value="Tetratricopeptide repeat domain"/>
    <property type="match status" value="1"/>
</dbReference>
<dbReference type="HAMAP" id="MF_03013">
    <property type="entry name" value="CLU"/>
    <property type="match status" value="1"/>
</dbReference>
<dbReference type="InterPro" id="IPR033646">
    <property type="entry name" value="CLU-central"/>
</dbReference>
<dbReference type="InterPro" id="IPR025697">
    <property type="entry name" value="CLU_dom"/>
</dbReference>
<dbReference type="InterPro" id="IPR028275">
    <property type="entry name" value="CLU_N"/>
</dbReference>
<dbReference type="InterPro" id="IPR027523">
    <property type="entry name" value="CLU_prot"/>
</dbReference>
<dbReference type="InterPro" id="IPR023231">
    <property type="entry name" value="GSKIP_dom_sf"/>
</dbReference>
<dbReference type="InterPro" id="IPR011990">
    <property type="entry name" value="TPR-like_helical_dom_sf"/>
</dbReference>
<dbReference type="PANTHER" id="PTHR12601:SF6">
    <property type="entry name" value="CLUSTERED MITOCHONDRIA PROTEIN HOMOLOG"/>
    <property type="match status" value="1"/>
</dbReference>
<dbReference type="PANTHER" id="PTHR12601">
    <property type="entry name" value="EUKARYOTIC TRANSLATION INITIATION FACTOR 3 SUBUNIT EIF-3"/>
    <property type="match status" value="1"/>
</dbReference>
<dbReference type="Pfam" id="PF13236">
    <property type="entry name" value="CLU"/>
    <property type="match status" value="1"/>
</dbReference>
<dbReference type="Pfam" id="PF15044">
    <property type="entry name" value="CLU_N"/>
    <property type="match status" value="1"/>
</dbReference>
<dbReference type="Pfam" id="PF12807">
    <property type="entry name" value="eIF3_p135"/>
    <property type="match status" value="1"/>
</dbReference>
<dbReference type="Pfam" id="PF13424">
    <property type="entry name" value="TPR_12"/>
    <property type="match status" value="1"/>
</dbReference>
<dbReference type="SUPFAM" id="SSF103107">
    <property type="entry name" value="Hypothetical protein c14orf129, hspc210"/>
    <property type="match status" value="1"/>
</dbReference>
<dbReference type="SUPFAM" id="SSF48452">
    <property type="entry name" value="TPR-like"/>
    <property type="match status" value="1"/>
</dbReference>
<dbReference type="PROSITE" id="PS51823">
    <property type="entry name" value="CLU"/>
    <property type="match status" value="1"/>
</dbReference>
<dbReference type="PROSITE" id="PS50293">
    <property type="entry name" value="TPR_REGION"/>
    <property type="match status" value="1"/>
</dbReference>
<gene>
    <name evidence="1" type="primary">CLU1</name>
    <name evidence="1" type="synonym">TIF31</name>
    <name type="ordered locus">DEHA2A03102g</name>
</gene>
<comment type="function">
    <text evidence="1">mRNA-binding protein involved in proper cytoplasmic distribution of mitochondria.</text>
</comment>
<comment type="subunit">
    <text evidence="1">May associate with the eukaryotic translation initiation factor 3 (eIF-3) complex.</text>
</comment>
<comment type="subcellular location">
    <subcellularLocation>
        <location evidence="1">Cytoplasm</location>
    </subcellularLocation>
</comment>
<comment type="similarity">
    <text evidence="1">Belongs to the CLU family.</text>
</comment>
<keyword id="KW-0963">Cytoplasm</keyword>
<keyword id="KW-1185">Reference proteome</keyword>
<keyword id="KW-0677">Repeat</keyword>
<keyword id="KW-0802">TPR repeat</keyword>
<organism>
    <name type="scientific">Debaryomyces hansenii (strain ATCC 36239 / CBS 767 / BCRC 21394 / JCM 1990 / NBRC 0083 / IGC 2968)</name>
    <name type="common">Yeast</name>
    <name type="synonym">Torulaspora hansenii</name>
    <dbReference type="NCBI Taxonomy" id="284592"/>
    <lineage>
        <taxon>Eukaryota</taxon>
        <taxon>Fungi</taxon>
        <taxon>Dikarya</taxon>
        <taxon>Ascomycota</taxon>
        <taxon>Saccharomycotina</taxon>
        <taxon>Pichiomycetes</taxon>
        <taxon>Debaryomycetaceae</taxon>
        <taxon>Debaryomyces</taxon>
    </lineage>
</organism>
<evidence type="ECO:0000255" key="1">
    <source>
        <dbReference type="HAMAP-Rule" id="MF_03013"/>
    </source>
</evidence>
<evidence type="ECO:0000255" key="2">
    <source>
        <dbReference type="PROSITE-ProRule" id="PRU01167"/>
    </source>
</evidence>
<evidence type="ECO:0000256" key="3">
    <source>
        <dbReference type="SAM" id="MobiDB-lite"/>
    </source>
</evidence>
<accession>B5RSP9</accession>
<sequence>MSSDEASSEALAQEDIKQITLRIKLPACISNEEDLEVPSLLSETLADIRETLNLSAATQNLTNFNVFYQDINLSENFDDLVPLNDILTELGVGEIDSLNLVLKEKPYNLAAIYDHLNKFREVIGLHFLDKYSSEVGVLSGVSKFGDIDLQDVKETEPETQDDKDKETDETKSTKEDSNQTEEKKSEIVFTAEEKQQIGKITDELISGNTPSLVEFGTFDNISGSIKTPIKSLTVSQWSPVPSFQKLKGDLLYITLQTLENETLNITCHLSGFFVNKSSTINFNPAIKMNENGKVHKDYLLINLVDSLSPSFSKTIQENELVLSRSSKHPESFLIPSNSLMSSPWIVNPSKFANQPDASRSQLPLISNGVDGSGFVKEWNEDFQAIRELPNSTINERILREKLLMKSLHEFNKVATETAMNVIKGNLTPLNPNEPKDYHIYLRNGIFYSLGVNATGAFDCTGGNEAARYTSSKDLAAIKLLNRIDAKGIYNLVTCIVDYMGQRVICQAPVPGILDSSHEDENEEEPTDKVCYGLSTDGSKIFSDSSFENVLKPIAEAFHLKPHPVTLLDNVKSQGDLITSKDIKGVKGTDERKYIIDLYRATPLDIEFIESNWDESKETSYPHRETALRHEAVEEWWKRKVSVLFKAETERLEKEGKLESKDGEKPQIVLPSDQITINTDAFTTIDESSDDQNEVREVSKFIKEHLIEEFLEENSKQISPFDGNHLTSMLHKQGINLRYLGHIAEQACVRKDEHLKKITEARKVNEEEISKRKEESEKKATEGKDQDKEEEKANDNEKNKEDDKEEVSNGEFEPIVANFDSLYRISVQEMVARSVKHLLRKISADIPVYLIPAFVSHFHNCLLGSEINSSPECIIDETLKGFYNATELEFTKLNSNKVIALVANEVLIRFRYELPTDWISTLIRPFQLFREIAIKYGIQWKSQEYAFTNEEFEKVKDKLAVETQVFEAKTSKHKKNKKQQSQLITKSVDRTTIFVTDDIVNFVPIVKDSTYRSSLVDEIFETARAQIFKGETETGINLLNNLLSVYEQIYGRVHPETSKFYGLLSQYYAELGLKSEACNIARKACILAERTTGFDSYESITAYINSAFFESTNDDYINALNLYNKAINDWTLVYGDGHPSSVNTYANLAELLSEHKLFQQANKLFEKAISISTKLNGEESQICGMLRYRYGGTLLGGGDFKSALDQFKSANDIFTKFIGPDDQLSKKSLSFVTNISTYLAYNEHQKSEQKKALAQQASASNGKVKAKSAVEQQLKSSKKGKKNDATQPNPEIASKSVDDILQYIEGKNPKKQLKKKSNNKKSKK</sequence>
<reference key="1">
    <citation type="journal article" date="2004" name="Nature">
        <title>Genome evolution in yeasts.</title>
        <authorList>
            <person name="Dujon B."/>
            <person name="Sherman D."/>
            <person name="Fischer G."/>
            <person name="Durrens P."/>
            <person name="Casaregola S."/>
            <person name="Lafontaine I."/>
            <person name="de Montigny J."/>
            <person name="Marck C."/>
            <person name="Neuveglise C."/>
            <person name="Talla E."/>
            <person name="Goffard N."/>
            <person name="Frangeul L."/>
            <person name="Aigle M."/>
            <person name="Anthouard V."/>
            <person name="Babour A."/>
            <person name="Barbe V."/>
            <person name="Barnay S."/>
            <person name="Blanchin S."/>
            <person name="Beckerich J.-M."/>
            <person name="Beyne E."/>
            <person name="Bleykasten C."/>
            <person name="Boisrame A."/>
            <person name="Boyer J."/>
            <person name="Cattolico L."/>
            <person name="Confanioleri F."/>
            <person name="de Daruvar A."/>
            <person name="Despons L."/>
            <person name="Fabre E."/>
            <person name="Fairhead C."/>
            <person name="Ferry-Dumazet H."/>
            <person name="Groppi A."/>
            <person name="Hantraye F."/>
            <person name="Hennequin C."/>
            <person name="Jauniaux N."/>
            <person name="Joyet P."/>
            <person name="Kachouri R."/>
            <person name="Kerrest A."/>
            <person name="Koszul R."/>
            <person name="Lemaire M."/>
            <person name="Lesur I."/>
            <person name="Ma L."/>
            <person name="Muller H."/>
            <person name="Nicaud J.-M."/>
            <person name="Nikolski M."/>
            <person name="Oztas S."/>
            <person name="Ozier-Kalogeropoulos O."/>
            <person name="Pellenz S."/>
            <person name="Potier S."/>
            <person name="Richard G.-F."/>
            <person name="Straub M.-L."/>
            <person name="Suleau A."/>
            <person name="Swennen D."/>
            <person name="Tekaia F."/>
            <person name="Wesolowski-Louvel M."/>
            <person name="Westhof E."/>
            <person name="Wirth B."/>
            <person name="Zeniou-Meyer M."/>
            <person name="Zivanovic Y."/>
            <person name="Bolotin-Fukuhara M."/>
            <person name="Thierry A."/>
            <person name="Bouchier C."/>
            <person name="Caudron B."/>
            <person name="Scarpelli C."/>
            <person name="Gaillardin C."/>
            <person name="Weissenbach J."/>
            <person name="Wincker P."/>
            <person name="Souciet J.-L."/>
        </authorList>
    </citation>
    <scope>NUCLEOTIDE SEQUENCE [LARGE SCALE GENOMIC DNA]</scope>
    <source>
        <strain>ATCC 36239 / CBS 767 / BCRC 21394 / JCM 1990 / NBRC 0083 / IGC 2968</strain>
    </source>
</reference>
<feature type="chain" id="PRO_0000366404" description="Clustered mitochondria protein homolog">
    <location>
        <begin position="1"/>
        <end position="1323"/>
    </location>
</feature>
<feature type="repeat" description="TPR 1">
    <location>
        <begin position="103"/>
        <end position="141"/>
    </location>
</feature>
<feature type="domain" description="Clu" evidence="2">
    <location>
        <begin position="351"/>
        <end position="608"/>
    </location>
</feature>
<feature type="repeat" description="TPR 2">
    <location>
        <begin position="530"/>
        <end position="563"/>
    </location>
</feature>
<feature type="repeat" description="TPR 3">
    <location>
        <begin position="1042"/>
        <end position="1076"/>
    </location>
</feature>
<feature type="repeat" description="TPR 4">
    <location>
        <begin position="1099"/>
        <end position="1132"/>
    </location>
</feature>
<feature type="repeat" description="TPR 5">
    <location>
        <begin position="1141"/>
        <end position="1174"/>
    </location>
</feature>
<feature type="repeat" description="TPR 6">
    <location>
        <begin position="1183"/>
        <end position="1216"/>
    </location>
</feature>
<feature type="region of interest" description="Disordered" evidence="3">
    <location>
        <begin position="149"/>
        <end position="186"/>
    </location>
</feature>
<feature type="region of interest" description="Disordered" evidence="3">
    <location>
        <begin position="764"/>
        <end position="808"/>
    </location>
</feature>
<feature type="region of interest" description="Disordered" evidence="3">
    <location>
        <begin position="1250"/>
        <end position="1323"/>
    </location>
</feature>
<feature type="compositionally biased region" description="Basic and acidic residues" evidence="3">
    <location>
        <begin position="150"/>
        <end position="186"/>
    </location>
</feature>
<feature type="compositionally biased region" description="Basic and acidic residues" evidence="3">
    <location>
        <begin position="764"/>
        <end position="801"/>
    </location>
</feature>
<feature type="compositionally biased region" description="Basic residues" evidence="3">
    <location>
        <begin position="1308"/>
        <end position="1323"/>
    </location>
</feature>
<proteinExistence type="inferred from homology"/>